<feature type="chain" id="PRO_0000255172" description="Lipid-A-disaccharide synthase">
    <location>
        <begin position="1"/>
        <end position="627"/>
    </location>
</feature>
<feature type="region of interest" description="Unknown">
    <location>
        <begin position="1"/>
        <end position="224"/>
    </location>
</feature>
<feature type="region of interest" description="Lipid-A-disaccharide synthase">
    <location>
        <begin position="225"/>
        <end position="627"/>
    </location>
</feature>
<gene>
    <name type="primary">lpxB</name>
    <name type="ordered locus">CAB759</name>
</gene>
<reference key="1">
    <citation type="journal article" date="2005" name="Genome Res.">
        <title>The Chlamydophila abortus genome sequence reveals an array of variable proteins that contribute to interspecies variation.</title>
        <authorList>
            <person name="Thomson N.R."/>
            <person name="Yeats C."/>
            <person name="Bell K."/>
            <person name="Holden M.T.G."/>
            <person name="Bentley S.D."/>
            <person name="Livingstone M."/>
            <person name="Cerdeno-Tarraga A.-M."/>
            <person name="Harris B."/>
            <person name="Doggett J."/>
            <person name="Ormond D."/>
            <person name="Mungall K."/>
            <person name="Clarke K."/>
            <person name="Feltwell T."/>
            <person name="Hance Z."/>
            <person name="Sanders M."/>
            <person name="Quail M.A."/>
            <person name="Price C."/>
            <person name="Barrell B.G."/>
            <person name="Parkhill J."/>
            <person name="Longbottom D."/>
        </authorList>
    </citation>
    <scope>NUCLEOTIDE SEQUENCE [LARGE SCALE GENOMIC DNA]</scope>
    <source>
        <strain>DSM 27085 / S26/3</strain>
    </source>
</reference>
<proteinExistence type="inferred from homology"/>
<dbReference type="EC" id="2.4.1.182"/>
<dbReference type="EMBL" id="CR848038">
    <property type="protein sequence ID" value="CAH64206.1"/>
    <property type="molecule type" value="Genomic_DNA"/>
</dbReference>
<dbReference type="RefSeq" id="WP_011097318.1">
    <property type="nucleotide sequence ID" value="NC_004552.2"/>
</dbReference>
<dbReference type="SMR" id="Q5L586"/>
<dbReference type="CAZy" id="GT19">
    <property type="family name" value="Glycosyltransferase Family 19"/>
</dbReference>
<dbReference type="KEGG" id="cab:CAB759"/>
<dbReference type="eggNOG" id="COG0763">
    <property type="taxonomic scope" value="Bacteria"/>
</dbReference>
<dbReference type="eggNOG" id="COG3952">
    <property type="taxonomic scope" value="Bacteria"/>
</dbReference>
<dbReference type="HOGENOM" id="CLU_430672_0_0_0"/>
<dbReference type="OrthoDB" id="9801642at2"/>
<dbReference type="UniPathway" id="UPA00973"/>
<dbReference type="Proteomes" id="UP000001012">
    <property type="component" value="Chromosome"/>
</dbReference>
<dbReference type="GO" id="GO:0016020">
    <property type="term" value="C:membrane"/>
    <property type="evidence" value="ECO:0007669"/>
    <property type="project" value="GOC"/>
</dbReference>
<dbReference type="GO" id="GO:0008915">
    <property type="term" value="F:lipid-A-disaccharide synthase activity"/>
    <property type="evidence" value="ECO:0007669"/>
    <property type="project" value="UniProtKB-UniRule"/>
</dbReference>
<dbReference type="GO" id="GO:0005543">
    <property type="term" value="F:phospholipid binding"/>
    <property type="evidence" value="ECO:0007669"/>
    <property type="project" value="TreeGrafter"/>
</dbReference>
<dbReference type="GO" id="GO:0009245">
    <property type="term" value="P:lipid A biosynthetic process"/>
    <property type="evidence" value="ECO:0007669"/>
    <property type="project" value="UniProtKB-UniRule"/>
</dbReference>
<dbReference type="HAMAP" id="MF_00392">
    <property type="entry name" value="LpxB"/>
    <property type="match status" value="1"/>
</dbReference>
<dbReference type="InterPro" id="IPR003835">
    <property type="entry name" value="Glyco_trans_19"/>
</dbReference>
<dbReference type="InterPro" id="IPR011499">
    <property type="entry name" value="Lipid_A_biosynth_N"/>
</dbReference>
<dbReference type="NCBIfam" id="TIGR00215">
    <property type="entry name" value="lpxB"/>
    <property type="match status" value="1"/>
</dbReference>
<dbReference type="NCBIfam" id="NF002173">
    <property type="entry name" value="PRK01021.1"/>
    <property type="match status" value="1"/>
</dbReference>
<dbReference type="PANTHER" id="PTHR30372">
    <property type="entry name" value="LIPID-A-DISACCHARIDE SYNTHASE"/>
    <property type="match status" value="1"/>
</dbReference>
<dbReference type="PANTHER" id="PTHR30372:SF4">
    <property type="entry name" value="LIPID-A-DISACCHARIDE SYNTHASE, MITOCHONDRIAL-RELATED"/>
    <property type="match status" value="1"/>
</dbReference>
<dbReference type="Pfam" id="PF07578">
    <property type="entry name" value="LAB_N"/>
    <property type="match status" value="2"/>
</dbReference>
<dbReference type="Pfam" id="PF02684">
    <property type="entry name" value="LpxB"/>
    <property type="match status" value="1"/>
</dbReference>
<dbReference type="SMART" id="SM01259">
    <property type="entry name" value="LAB_N"/>
    <property type="match status" value="2"/>
</dbReference>
<dbReference type="SUPFAM" id="SSF53756">
    <property type="entry name" value="UDP-Glycosyltransferase/glycogen phosphorylase"/>
    <property type="match status" value="1"/>
</dbReference>
<name>LPXB_CHLAB</name>
<comment type="function">
    <text evidence="1">Condensation of UDP-2,3-diacylglucosamine and 2,3-diacylglucosamine-1-phosphate to form lipid A disaccharide, a precursor of lipid A, a phosphorylated glycolipid that anchors the lipopolysaccharide to the outer membrane of the cell.</text>
</comment>
<comment type="catalytic activity">
    <reaction>
        <text>a lipid X + a UDP-2-N,3-O-bis[(3R)-3-hydroxyacyl]-alpha-D-glucosamine = a lipid A disaccharide + UDP + H(+)</text>
        <dbReference type="Rhea" id="RHEA:67828"/>
        <dbReference type="ChEBI" id="CHEBI:15378"/>
        <dbReference type="ChEBI" id="CHEBI:58223"/>
        <dbReference type="ChEBI" id="CHEBI:137748"/>
        <dbReference type="ChEBI" id="CHEBI:176338"/>
        <dbReference type="ChEBI" id="CHEBI:176343"/>
        <dbReference type="EC" id="2.4.1.182"/>
    </reaction>
</comment>
<comment type="pathway">
    <text>Bacterial outer membrane biogenesis; LPS lipid A biosynthesis.</text>
</comment>
<comment type="similarity">
    <text evidence="2">In the C-terminal section; belongs to the LpxB family.</text>
</comment>
<keyword id="KW-0328">Glycosyltransferase</keyword>
<keyword id="KW-0441">Lipid A biosynthesis</keyword>
<keyword id="KW-0444">Lipid biosynthesis</keyword>
<keyword id="KW-0443">Lipid metabolism</keyword>
<keyword id="KW-0808">Transferase</keyword>
<organism>
    <name type="scientific">Chlamydia abortus (strain DSM 27085 / S26/3)</name>
    <name type="common">Chlamydophila abortus</name>
    <dbReference type="NCBI Taxonomy" id="218497"/>
    <lineage>
        <taxon>Bacteria</taxon>
        <taxon>Pseudomonadati</taxon>
        <taxon>Chlamydiota</taxon>
        <taxon>Chlamydiia</taxon>
        <taxon>Chlamydiales</taxon>
        <taxon>Chlamydiaceae</taxon>
        <taxon>Chlamydia/Chlamydophila group</taxon>
        <taxon>Chlamydia</taxon>
    </lineage>
</organism>
<accession>Q5L586</accession>
<protein>
    <recommendedName>
        <fullName>Lipid-A-disaccharide synthase</fullName>
        <ecNumber>2.4.1.182</ecNumber>
    </recommendedName>
</protein>
<sequence>MFPLYLVRLLYPIGLIANLFFGFAFTLQWFLSERHKRACVPKAFWIFSSIGAILMIAHGFIQSQFPIALLHGANLVIYFRNLNISSSRKLSLKTTLIILAVTLLLTALPFALEAYYHPNMQWMASPNIFHLPLPPPNMYWHMIGCLGLFTFSCRFFIQWCHLEMNNQSTLPVLFWQVGFVGGFLAFLYFIRTGDPVNILSYGCGLFPSIANLRIIYKKSRLSEFHNPSYFISAGEASGDTLGSDLLRHIKALHPDKRCFGVGGPLMRQEGLEPLIHMEEFQVSGFLEILTSIFTLIKKYRKLYKAILKENPEIVFCIDFPDFHFFLIKKLRKCGYTGKIVHYVCPSIWAWRPKRKKILEKYLDTLLLILPFENELFINSPLKTIYLGHPLVKTISNFQHCPSWKQALAISDQPIVALFPGSRPGDILRNLQVHIRAFLASSLAESHQLLVSSYNLKHDQTILDLLEKEGCCGKTVPAMYRYHLMRDCDCALAKCGTIALEAALNQTPTIVTCLLRPFDIFLAKYIFKIFMSAYSLPNIITKSIIFPEFIGGKSDFTPEEVAAAIDILANPKSREKQKRACQTLLETMETNVVTVQECLQTIHSLKSRFHTENDCLGNYVQKNVRPSF</sequence>
<evidence type="ECO:0000250" key="1"/>
<evidence type="ECO:0000305" key="2"/>